<evidence type="ECO:0000250" key="1"/>
<evidence type="ECO:0000250" key="2">
    <source>
        <dbReference type="UniProtKB" id="Q8WU67"/>
    </source>
</evidence>
<evidence type="ECO:0000250" key="3">
    <source>
        <dbReference type="UniProtKB" id="Q91ZH7"/>
    </source>
</evidence>
<evidence type="ECO:0000255" key="4"/>
<evidence type="ECO:0000305" key="5"/>
<sequence length="411" mass="46527">MQRLAMDLRMLSRELSHYLEHQVRVGFFGSGVGFSLILGFSVAYACYYLSSIAKKPQLVTGGESFSRFLQDHCPVVTETYYPTVWCWESRGQTLLRPFITSKPLVQYRNELIKTADGGQISLDWFDNDNSKHYMDASTRPTVLLLPGLTGTSKESYILHMIHLSEELGYRYVVFNNRGVAGENLLTPRTYCCSNTEDLETVIHHVHSLYPSAPFLAAGVSMGGMLLLNYLGKIGPKTPLKAAATFSVGWNTFACSESLEKPLNWLLFNYYLTTCLQSSVNKHRHMFVKQIDVDHVMKAKSIREFDKRFTSVMFGYRTIDDYYTDASPNRRLKSVGIPVLCLNSVDDVFSPSHAIPIETAKQNPNVALVLTSYGGHIGFLEGIWPRQSTYMDRVFKQFVQAMIEHGHELSSM</sequence>
<accession>Q0VC00</accession>
<reference key="1">
    <citation type="submission" date="2006-08" db="EMBL/GenBank/DDBJ databases">
        <authorList>
            <consortium name="NIH - Mammalian Gene Collection (MGC) project"/>
        </authorList>
    </citation>
    <scope>NUCLEOTIDE SEQUENCE [LARGE SCALE MRNA]</scope>
    <source>
        <strain>Hereford</strain>
        <tissue>Hippocampus</tissue>
    </source>
</reference>
<name>ABHD3_BOVIN</name>
<gene>
    <name evidence="2" type="primary">ABHD3</name>
</gene>
<keyword id="KW-0378">Hydrolase</keyword>
<keyword id="KW-0443">Lipid metabolism</keyword>
<keyword id="KW-0472">Membrane</keyword>
<keyword id="KW-1208">Phospholipid metabolism</keyword>
<keyword id="KW-1185">Reference proteome</keyword>
<keyword id="KW-0719">Serine esterase</keyword>
<keyword id="KW-0735">Signal-anchor</keyword>
<keyword id="KW-0812">Transmembrane</keyword>
<keyword id="KW-1133">Transmembrane helix</keyword>
<dbReference type="EC" id="3.1.1.32" evidence="3"/>
<dbReference type="EC" id="3.1.1.4" evidence="3"/>
<dbReference type="EMBL" id="BC120421">
    <property type="protein sequence ID" value="AAI20422.1"/>
    <property type="molecule type" value="mRNA"/>
</dbReference>
<dbReference type="RefSeq" id="NP_001069655.1">
    <property type="nucleotide sequence ID" value="NM_001076187.1"/>
</dbReference>
<dbReference type="FunCoup" id="Q0VC00">
    <property type="interactions" value="1233"/>
</dbReference>
<dbReference type="STRING" id="9913.ENSBTAP00000024863"/>
<dbReference type="ESTHER" id="bovin-abhd3">
    <property type="family name" value="abh_upf0017"/>
</dbReference>
<dbReference type="Ensembl" id="ENSBTAT00000024863.6">
    <property type="protein sequence ID" value="ENSBTAP00000024863.5"/>
    <property type="gene ID" value="ENSBTAG00000005709.7"/>
</dbReference>
<dbReference type="GeneID" id="539795"/>
<dbReference type="KEGG" id="bta:539795"/>
<dbReference type="CTD" id="171586"/>
<dbReference type="VEuPathDB" id="HostDB:ENSBTAG00000005709"/>
<dbReference type="VGNC" id="VGNC:58350">
    <property type="gene designation" value="ABHD3"/>
</dbReference>
<dbReference type="GeneTree" id="ENSGT00950000182902"/>
<dbReference type="InParanoid" id="Q0VC00"/>
<dbReference type="OMA" id="LDWHGPH"/>
<dbReference type="OrthoDB" id="247542at2759"/>
<dbReference type="Reactome" id="R-BTA-1483191">
    <property type="pathway name" value="Synthesis of PC"/>
</dbReference>
<dbReference type="Proteomes" id="UP000009136">
    <property type="component" value="Chromosome 24"/>
</dbReference>
<dbReference type="Bgee" id="ENSBTAG00000005709">
    <property type="expression patterns" value="Expressed in spermatocyte and 102 other cell types or tissues"/>
</dbReference>
<dbReference type="GO" id="GO:0016020">
    <property type="term" value="C:membrane"/>
    <property type="evidence" value="ECO:0007669"/>
    <property type="project" value="UniProtKB-SubCell"/>
</dbReference>
<dbReference type="GO" id="GO:0008126">
    <property type="term" value="F:acetylesterase activity"/>
    <property type="evidence" value="ECO:0000318"/>
    <property type="project" value="GO_Central"/>
</dbReference>
<dbReference type="GO" id="GO:0047372">
    <property type="term" value="F:monoacylglycerol lipase activity"/>
    <property type="evidence" value="ECO:0000318"/>
    <property type="project" value="GO_Central"/>
</dbReference>
<dbReference type="GO" id="GO:0008970">
    <property type="term" value="F:phospholipase A1 activity"/>
    <property type="evidence" value="ECO:0000250"/>
    <property type="project" value="UniProtKB"/>
</dbReference>
<dbReference type="GO" id="GO:0004623">
    <property type="term" value="F:phospholipase A2 activity"/>
    <property type="evidence" value="ECO:0000250"/>
    <property type="project" value="UniProtKB"/>
</dbReference>
<dbReference type="GO" id="GO:0051792">
    <property type="term" value="P:medium-chain fatty acid biosynthetic process"/>
    <property type="evidence" value="ECO:0000318"/>
    <property type="project" value="GO_Central"/>
</dbReference>
<dbReference type="GO" id="GO:0051793">
    <property type="term" value="P:medium-chain fatty acid catabolic process"/>
    <property type="evidence" value="ECO:0000318"/>
    <property type="project" value="GO_Central"/>
</dbReference>
<dbReference type="GO" id="GO:0046470">
    <property type="term" value="P:phosphatidylcholine metabolic process"/>
    <property type="evidence" value="ECO:0000250"/>
    <property type="project" value="UniProtKB"/>
</dbReference>
<dbReference type="FunFam" id="3.40.50.1820:FF:000079">
    <property type="entry name" value="Abhydrolase domain-containing 3"/>
    <property type="match status" value="1"/>
</dbReference>
<dbReference type="Gene3D" id="3.40.50.1820">
    <property type="entry name" value="alpha/beta hydrolase"/>
    <property type="match status" value="1"/>
</dbReference>
<dbReference type="InterPro" id="IPR000073">
    <property type="entry name" value="AB_hydrolase_1"/>
</dbReference>
<dbReference type="InterPro" id="IPR000952">
    <property type="entry name" value="AB_hydrolase_4_CS"/>
</dbReference>
<dbReference type="InterPro" id="IPR050960">
    <property type="entry name" value="AB_hydrolase_4_sf"/>
</dbReference>
<dbReference type="InterPro" id="IPR029058">
    <property type="entry name" value="AB_hydrolase_fold"/>
</dbReference>
<dbReference type="InterPro" id="IPR012020">
    <property type="entry name" value="ABHD4"/>
</dbReference>
<dbReference type="PANTHER" id="PTHR10794">
    <property type="entry name" value="ABHYDROLASE DOMAIN-CONTAINING PROTEIN"/>
    <property type="match status" value="1"/>
</dbReference>
<dbReference type="PANTHER" id="PTHR10794:SF50">
    <property type="entry name" value="PHOSPHOLIPASE ABHD3"/>
    <property type="match status" value="1"/>
</dbReference>
<dbReference type="Pfam" id="PF00561">
    <property type="entry name" value="Abhydrolase_1"/>
    <property type="match status" value="1"/>
</dbReference>
<dbReference type="PIRSF" id="PIRSF005211">
    <property type="entry name" value="Ab_hydro_YheT"/>
    <property type="match status" value="1"/>
</dbReference>
<dbReference type="SUPFAM" id="SSF53474">
    <property type="entry name" value="alpha/beta-Hydrolases"/>
    <property type="match status" value="1"/>
</dbReference>
<dbReference type="PROSITE" id="PS01133">
    <property type="entry name" value="UPF0017"/>
    <property type="match status" value="1"/>
</dbReference>
<organism>
    <name type="scientific">Bos taurus</name>
    <name type="common">Bovine</name>
    <dbReference type="NCBI Taxonomy" id="9913"/>
    <lineage>
        <taxon>Eukaryota</taxon>
        <taxon>Metazoa</taxon>
        <taxon>Chordata</taxon>
        <taxon>Craniata</taxon>
        <taxon>Vertebrata</taxon>
        <taxon>Euteleostomi</taxon>
        <taxon>Mammalia</taxon>
        <taxon>Eutheria</taxon>
        <taxon>Laurasiatheria</taxon>
        <taxon>Artiodactyla</taxon>
        <taxon>Ruminantia</taxon>
        <taxon>Pecora</taxon>
        <taxon>Bovidae</taxon>
        <taxon>Bovinae</taxon>
        <taxon>Bos</taxon>
    </lineage>
</organism>
<proteinExistence type="evidence at transcript level"/>
<protein>
    <recommendedName>
        <fullName evidence="5">Phospholipase ABHD3</fullName>
        <ecNumber evidence="3">3.1.1.32</ecNumber>
        <ecNumber evidence="3">3.1.1.4</ecNumber>
    </recommendedName>
    <alternativeName>
        <fullName evidence="2">Abhydrolase domain-containing protein 3</fullName>
    </alternativeName>
</protein>
<comment type="function">
    <text evidence="3">Phospholipase that may play a role in phospholipids remodeling. May selectively cleave myristate (C14)-containing phosphatidylcholines through its predominant phospholipase 1 activity, cleaving preferentially acyl groups in sn1 position. In parallel, may have a minor phospholipase 2 activity acting on acyl groups in position sn2. In addition to (C14)-containing phosphatidylcholines, may also act on other medium-chain-containing and oxidatively truncated phospholipids.</text>
</comment>
<comment type="catalytic activity">
    <reaction evidence="3">
        <text>a 1,2-diacyl-sn-glycero-3-phosphocholine + H2O = a 1-acyl-sn-glycero-3-phosphocholine + a fatty acid + H(+)</text>
        <dbReference type="Rhea" id="RHEA:15801"/>
        <dbReference type="ChEBI" id="CHEBI:15377"/>
        <dbReference type="ChEBI" id="CHEBI:15378"/>
        <dbReference type="ChEBI" id="CHEBI:28868"/>
        <dbReference type="ChEBI" id="CHEBI:57643"/>
        <dbReference type="ChEBI" id="CHEBI:58168"/>
        <dbReference type="EC" id="3.1.1.4"/>
    </reaction>
    <physiologicalReaction direction="left-to-right" evidence="3">
        <dbReference type="Rhea" id="RHEA:15802"/>
    </physiologicalReaction>
</comment>
<comment type="catalytic activity">
    <reaction evidence="3">
        <text>a 1,2-diacyl-sn-glycero-3-phosphocholine + H2O = a 2-acyl-sn-glycero-3-phosphocholine + a fatty acid + H(+)</text>
        <dbReference type="Rhea" id="RHEA:18689"/>
        <dbReference type="ChEBI" id="CHEBI:15377"/>
        <dbReference type="ChEBI" id="CHEBI:15378"/>
        <dbReference type="ChEBI" id="CHEBI:28868"/>
        <dbReference type="ChEBI" id="CHEBI:57643"/>
        <dbReference type="ChEBI" id="CHEBI:57875"/>
        <dbReference type="EC" id="3.1.1.32"/>
    </reaction>
    <physiologicalReaction direction="left-to-right" evidence="3">
        <dbReference type="Rhea" id="RHEA:18690"/>
    </physiologicalReaction>
</comment>
<comment type="catalytic activity">
    <reaction evidence="3">
        <text>1-tetradecanoyl-2-(9Z,12Z-octadecadienoyl)-sn-glycero-3-phosphocholine + H2O = 2-(9Z,12Z-octadecadienoyl)-sn-glycero-3-phosphocholine + tetradecanoate + H(+)</text>
        <dbReference type="Rhea" id="RHEA:54388"/>
        <dbReference type="ChEBI" id="CHEBI:15377"/>
        <dbReference type="ChEBI" id="CHEBI:15378"/>
        <dbReference type="ChEBI" id="CHEBI:30807"/>
        <dbReference type="ChEBI" id="CHEBI:76084"/>
        <dbReference type="ChEBI" id="CHEBI:86094"/>
    </reaction>
    <physiologicalReaction direction="left-to-right" evidence="3">
        <dbReference type="Rhea" id="RHEA:54389"/>
    </physiologicalReaction>
</comment>
<comment type="catalytic activity">
    <reaction evidence="3">
        <text>1-tetradecanoyl-2-(9Z,12Z-octadecadienoyl)-sn-glycero-3-phosphocholine + H2O = 1-tetradecanoyl-sn-glycero-3-phosphocholine + (9Z,12Z)-octadecadienoate + H(+)</text>
        <dbReference type="Rhea" id="RHEA:54392"/>
        <dbReference type="ChEBI" id="CHEBI:15377"/>
        <dbReference type="ChEBI" id="CHEBI:15378"/>
        <dbReference type="ChEBI" id="CHEBI:30245"/>
        <dbReference type="ChEBI" id="CHEBI:64489"/>
        <dbReference type="ChEBI" id="CHEBI:86094"/>
    </reaction>
    <physiologicalReaction direction="left-to-right" evidence="3">
        <dbReference type="Rhea" id="RHEA:54393"/>
    </physiologicalReaction>
</comment>
<comment type="catalytic activity">
    <reaction evidence="3">
        <text>1-tetradecanoyl-2-(5Z,8Z,11Z,14Z-eicosatetraenoyl)-sn-glycero-3-phosphocholine + H2O = 2-(5Z,8Z,11Z,14Z)-eicosatetraenoyl-sn-glycero-3-phosphocholine + tetradecanoate + H(+)</text>
        <dbReference type="Rhea" id="RHEA:54396"/>
        <dbReference type="ChEBI" id="CHEBI:15377"/>
        <dbReference type="ChEBI" id="CHEBI:15378"/>
        <dbReference type="ChEBI" id="CHEBI:30807"/>
        <dbReference type="ChEBI" id="CHEBI:76079"/>
        <dbReference type="ChEBI" id="CHEBI:86102"/>
    </reaction>
    <physiologicalReaction direction="left-to-right" evidence="3">
        <dbReference type="Rhea" id="RHEA:54397"/>
    </physiologicalReaction>
</comment>
<comment type="catalytic activity">
    <reaction evidence="3">
        <text>1-tetradecanoyl-2-(4Z,7Z,10Z,13Z,16Z,19Z-docosahexaenoyl)-sn-glycero-3-phosphocholine + H2O = 2-(4Z,7Z,10Z,13Z,16Z,19Z-docosahexaenoyl)-sn-glycero-3-phosphocholine + tetradecanoate + H(+)</text>
        <dbReference type="Rhea" id="RHEA:54400"/>
        <dbReference type="ChEBI" id="CHEBI:15377"/>
        <dbReference type="ChEBI" id="CHEBI:15378"/>
        <dbReference type="ChEBI" id="CHEBI:30807"/>
        <dbReference type="ChEBI" id="CHEBI:76085"/>
        <dbReference type="ChEBI" id="CHEBI:86162"/>
    </reaction>
    <physiologicalReaction direction="left-to-right" evidence="3">
        <dbReference type="Rhea" id="RHEA:54401"/>
    </physiologicalReaction>
</comment>
<comment type="catalytic activity">
    <reaction evidence="3">
        <text>1,2-ditetradecanoyl-sn-glycero-3-phosphocholine + H2O = 2-tetradecanoyl-sn-glycero-3-phosphocholine + tetradecanoate + H(+)</text>
        <dbReference type="Rhea" id="RHEA:54404"/>
        <dbReference type="ChEBI" id="CHEBI:15377"/>
        <dbReference type="ChEBI" id="CHEBI:15378"/>
        <dbReference type="ChEBI" id="CHEBI:30807"/>
        <dbReference type="ChEBI" id="CHEBI:45240"/>
        <dbReference type="ChEBI" id="CHEBI:131738"/>
    </reaction>
    <physiologicalReaction direction="left-to-right" evidence="3">
        <dbReference type="Rhea" id="RHEA:54405"/>
    </physiologicalReaction>
</comment>
<comment type="catalytic activity">
    <reaction evidence="3">
        <text>1-octadecanoyl-2-acetyl-sn-glycero-3-phosphocholine + H2O = 1-octadecanoyl-sn-glycero-3-phosphocholine + acetate + H(+)</text>
        <dbReference type="Rhea" id="RHEA:54408"/>
        <dbReference type="ChEBI" id="CHEBI:15377"/>
        <dbReference type="ChEBI" id="CHEBI:15378"/>
        <dbReference type="ChEBI" id="CHEBI:30089"/>
        <dbReference type="ChEBI" id="CHEBI:73858"/>
        <dbReference type="ChEBI" id="CHEBI:75220"/>
    </reaction>
    <physiologicalReaction direction="left-to-right" evidence="3">
        <dbReference type="Rhea" id="RHEA:54409"/>
    </physiologicalReaction>
</comment>
<comment type="catalytic activity">
    <reaction evidence="3">
        <text>1,2-ditetradecanoyl-sn-glycero-3-phosphocholine + H2O = 1-tetradecanoyl-sn-glycero-3-phosphocholine + tetradecanoate + H(+)</text>
        <dbReference type="Rhea" id="RHEA:54456"/>
        <dbReference type="ChEBI" id="CHEBI:15377"/>
        <dbReference type="ChEBI" id="CHEBI:15378"/>
        <dbReference type="ChEBI" id="CHEBI:30807"/>
        <dbReference type="ChEBI" id="CHEBI:45240"/>
        <dbReference type="ChEBI" id="CHEBI:64489"/>
    </reaction>
    <physiologicalReaction direction="left-to-right" evidence="3">
        <dbReference type="Rhea" id="RHEA:54457"/>
    </physiologicalReaction>
</comment>
<comment type="catalytic activity">
    <reaction evidence="3">
        <text>1-octadecanoyl-2-pentanoyl-sn-glycero-3-phosphocholine + H2O = pentanoate + 1-octadecanoyl-sn-glycero-3-phosphocholine + H(+)</text>
        <dbReference type="Rhea" id="RHEA:54460"/>
        <dbReference type="ChEBI" id="CHEBI:15377"/>
        <dbReference type="ChEBI" id="CHEBI:15378"/>
        <dbReference type="ChEBI" id="CHEBI:31011"/>
        <dbReference type="ChEBI" id="CHEBI:73858"/>
        <dbReference type="ChEBI" id="CHEBI:138211"/>
    </reaction>
    <physiologicalReaction direction="left-to-right" evidence="3">
        <dbReference type="Rhea" id="RHEA:54461"/>
    </physiologicalReaction>
</comment>
<comment type="catalytic activity">
    <reaction evidence="3">
        <text>1-octadecanoyl-2-hexanoyl-sn-glycero-3-phosphocholine + H2O = hexanoate + 1-octadecanoyl-sn-glycero-3-phosphocholine + H(+)</text>
        <dbReference type="Rhea" id="RHEA:54464"/>
        <dbReference type="ChEBI" id="CHEBI:15377"/>
        <dbReference type="ChEBI" id="CHEBI:15378"/>
        <dbReference type="ChEBI" id="CHEBI:17120"/>
        <dbReference type="ChEBI" id="CHEBI:73858"/>
        <dbReference type="ChEBI" id="CHEBI:138212"/>
    </reaction>
    <physiologicalReaction direction="left-to-right" evidence="3">
        <dbReference type="Rhea" id="RHEA:54465"/>
    </physiologicalReaction>
</comment>
<comment type="catalytic activity">
    <reaction evidence="3">
        <text>1-octadecanoyl-2-octanoyl-sn-glycero-3-phosphocholine + H2O = 1-octadecanoyl-sn-glycero-3-phosphocholine + octanoate + H(+)</text>
        <dbReference type="Rhea" id="RHEA:54468"/>
        <dbReference type="ChEBI" id="CHEBI:15377"/>
        <dbReference type="ChEBI" id="CHEBI:15378"/>
        <dbReference type="ChEBI" id="CHEBI:25646"/>
        <dbReference type="ChEBI" id="CHEBI:73858"/>
        <dbReference type="ChEBI" id="CHEBI:138213"/>
    </reaction>
    <physiologicalReaction direction="left-to-right" evidence="3">
        <dbReference type="Rhea" id="RHEA:54469"/>
    </physiologicalReaction>
</comment>
<comment type="catalytic activity">
    <reaction evidence="3">
        <text>1-octadecanoyl-2-nonanoyl-sn-glycero-3-phosphocholine + H2O = nonanoate + 1-octadecanoyl-sn-glycero-3-phosphocholine + H(+)</text>
        <dbReference type="Rhea" id="RHEA:54472"/>
        <dbReference type="ChEBI" id="CHEBI:15377"/>
        <dbReference type="ChEBI" id="CHEBI:15378"/>
        <dbReference type="ChEBI" id="CHEBI:32361"/>
        <dbReference type="ChEBI" id="CHEBI:73858"/>
        <dbReference type="ChEBI" id="CHEBI:138214"/>
    </reaction>
    <physiologicalReaction direction="left-to-right" evidence="3">
        <dbReference type="Rhea" id="RHEA:54473"/>
    </physiologicalReaction>
</comment>
<comment type="catalytic activity">
    <reaction evidence="3">
        <text>1-O-hexadecyl-2-nonadioyl-sn-glycero-3-phosphocholine + H2O = nonanedioate + 1-O-hexadecyl-sn-glycero-3-phosphocholine + H(+)</text>
        <dbReference type="Rhea" id="RHEA:54552"/>
        <dbReference type="ChEBI" id="CHEBI:15377"/>
        <dbReference type="ChEBI" id="CHEBI:15378"/>
        <dbReference type="ChEBI" id="CHEBI:64496"/>
        <dbReference type="ChEBI" id="CHEBI:78208"/>
        <dbReference type="ChEBI" id="CHEBI:138269"/>
    </reaction>
    <physiologicalReaction direction="left-to-right" evidence="3">
        <dbReference type="Rhea" id="RHEA:54553"/>
    </physiologicalReaction>
</comment>
<comment type="catalytic activity">
    <reaction evidence="3">
        <text>1-hexadecanoyl-2-nonadioyl-sn-glycero-3-phosphocholine + H2O = nonanedioate + 1-hexadecanoyl-sn-glycero-3-phosphocholine + H(+)</text>
        <dbReference type="Rhea" id="RHEA:41388"/>
        <dbReference type="ChEBI" id="CHEBI:15377"/>
        <dbReference type="ChEBI" id="CHEBI:15378"/>
        <dbReference type="ChEBI" id="CHEBI:72998"/>
        <dbReference type="ChEBI" id="CHEBI:78207"/>
        <dbReference type="ChEBI" id="CHEBI:78208"/>
    </reaction>
    <physiologicalReaction direction="left-to-right" evidence="3">
        <dbReference type="Rhea" id="RHEA:41389"/>
    </physiologicalReaction>
</comment>
<comment type="catalytic activity">
    <reaction evidence="3">
        <text>1-hexadecanoyl-2-(9-oxononanoyl)-sn-glycero-3-phosphocholine + H2O = 9-oxononanoate + 1-hexadecanoyl-sn-glycero-3-phosphocholine + H(+)</text>
        <dbReference type="Rhea" id="RHEA:41179"/>
        <dbReference type="ChEBI" id="CHEBI:15377"/>
        <dbReference type="ChEBI" id="CHEBI:15378"/>
        <dbReference type="ChEBI" id="CHEBI:61042"/>
        <dbReference type="ChEBI" id="CHEBI:72998"/>
        <dbReference type="ChEBI" id="CHEBI:77812"/>
    </reaction>
    <physiologicalReaction direction="left-to-right" evidence="3">
        <dbReference type="Rhea" id="RHEA:41180"/>
    </physiologicalReaction>
</comment>
<comment type="catalytic activity">
    <reaction evidence="3">
        <text>1-hexadecanoyl-2-(5-oxopentanoyl)-sn-glycero-3-phosphocholine + H2O = 5-oxopentanoate + 1-hexadecanoyl-sn-glycero-3-phosphocholine + H(+)</text>
        <dbReference type="Rhea" id="RHEA:40483"/>
        <dbReference type="ChEBI" id="CHEBI:15377"/>
        <dbReference type="ChEBI" id="CHEBI:15378"/>
        <dbReference type="ChEBI" id="CHEBI:16120"/>
        <dbReference type="ChEBI" id="CHEBI:72998"/>
        <dbReference type="ChEBI" id="CHEBI:77890"/>
    </reaction>
    <physiologicalReaction direction="left-to-right" evidence="3">
        <dbReference type="Rhea" id="RHEA:40484"/>
    </physiologicalReaction>
</comment>
<comment type="catalytic activity">
    <reaction evidence="3">
        <text>1-hexadecanoyl-2-glutaroyl-sn-glycero-3-phosphocholine + H2O = glutarate + 1-hexadecanoyl-sn-glycero-3-phosphocholine + H(+)</text>
        <dbReference type="Rhea" id="RHEA:41159"/>
        <dbReference type="ChEBI" id="CHEBI:15377"/>
        <dbReference type="ChEBI" id="CHEBI:15378"/>
        <dbReference type="ChEBI" id="CHEBI:30921"/>
        <dbReference type="ChEBI" id="CHEBI:72998"/>
        <dbReference type="ChEBI" id="CHEBI:77756"/>
    </reaction>
    <physiologicalReaction direction="left-to-right" evidence="3">
        <dbReference type="Rhea" id="RHEA:41160"/>
    </physiologicalReaction>
</comment>
<comment type="catalytic activity">
    <reaction evidence="3">
        <text>1-O-hexadecyl-2-acetyl-sn-glycero-3-phosphocholine + H2O = 1-O-hexadecyl-sn-glycero-3-phosphocholine + acetate + H(+)</text>
        <dbReference type="Rhea" id="RHEA:40479"/>
        <dbReference type="ChEBI" id="CHEBI:15377"/>
        <dbReference type="ChEBI" id="CHEBI:15378"/>
        <dbReference type="ChEBI" id="CHEBI:30089"/>
        <dbReference type="ChEBI" id="CHEBI:44811"/>
        <dbReference type="ChEBI" id="CHEBI:64496"/>
    </reaction>
    <physiologicalReaction direction="left-to-right" evidence="3">
        <dbReference type="Rhea" id="RHEA:40480"/>
    </physiologicalReaction>
</comment>
<comment type="subcellular location">
    <subcellularLocation>
        <location evidence="5">Membrane</location>
        <topology evidence="5">Single-pass type II membrane protein</topology>
    </subcellularLocation>
</comment>
<comment type="similarity">
    <text evidence="5">Belongs to the AB hydrolase superfamily. AB hydrolase 4 family.</text>
</comment>
<feature type="chain" id="PRO_0000280207" description="Phospholipase ABHD3">
    <location>
        <begin position="1"/>
        <end position="411"/>
    </location>
</feature>
<feature type="transmembrane region" description="Helical; Signal-anchor for type II membrane protein" evidence="4">
    <location>
        <begin position="25"/>
        <end position="45"/>
    </location>
</feature>
<feature type="domain" description="AB hydrolase-1" evidence="4">
    <location>
        <begin position="140"/>
        <end position="247"/>
    </location>
</feature>
<feature type="active site" description="Charge relay system" evidence="1">
    <location>
        <position position="220"/>
    </location>
</feature>
<feature type="active site" description="Charge relay system" evidence="1">
    <location>
        <position position="346"/>
    </location>
</feature>
<feature type="active site" description="Charge relay system" evidence="1">
    <location>
        <position position="375"/>
    </location>
</feature>